<name>NADK_SALHS</name>
<feature type="chain" id="PRO_1000120884" description="NAD kinase">
    <location>
        <begin position="1"/>
        <end position="292"/>
    </location>
</feature>
<feature type="active site" description="Proton acceptor" evidence="1">
    <location>
        <position position="73"/>
    </location>
</feature>
<feature type="binding site" evidence="1">
    <location>
        <begin position="73"/>
        <end position="74"/>
    </location>
    <ligand>
        <name>NAD(+)</name>
        <dbReference type="ChEBI" id="CHEBI:57540"/>
    </ligand>
</feature>
<feature type="binding site" evidence="1">
    <location>
        <begin position="147"/>
        <end position="148"/>
    </location>
    <ligand>
        <name>NAD(+)</name>
        <dbReference type="ChEBI" id="CHEBI:57540"/>
    </ligand>
</feature>
<feature type="binding site" evidence="1">
    <location>
        <position position="158"/>
    </location>
    <ligand>
        <name>NAD(+)</name>
        <dbReference type="ChEBI" id="CHEBI:57540"/>
    </ligand>
</feature>
<feature type="binding site" evidence="1">
    <location>
        <position position="175"/>
    </location>
    <ligand>
        <name>NAD(+)</name>
        <dbReference type="ChEBI" id="CHEBI:57540"/>
    </ligand>
</feature>
<feature type="binding site" evidence="1">
    <location>
        <position position="177"/>
    </location>
    <ligand>
        <name>NAD(+)</name>
        <dbReference type="ChEBI" id="CHEBI:57540"/>
    </ligand>
</feature>
<feature type="binding site" evidence="1">
    <location>
        <begin position="188"/>
        <end position="193"/>
    </location>
    <ligand>
        <name>NAD(+)</name>
        <dbReference type="ChEBI" id="CHEBI:57540"/>
    </ligand>
</feature>
<feature type="binding site" evidence="1">
    <location>
        <position position="247"/>
    </location>
    <ligand>
        <name>NAD(+)</name>
        <dbReference type="ChEBI" id="CHEBI:57540"/>
    </ligand>
</feature>
<proteinExistence type="inferred from homology"/>
<evidence type="ECO:0000255" key="1">
    <source>
        <dbReference type="HAMAP-Rule" id="MF_00361"/>
    </source>
</evidence>
<sequence length="292" mass="32584">MNNHFKCIGIVGHPRHPTALTTHEMLYRWLCDQGYEVIVEQQIAHELQLKNVPTGTLAEIGQQADLAVVVGGDGNMLGAARTLARYDINVIGINRGNLGFLTDLDPDNALQQLSDVLEGRYISEKRFLLEAQVCQQDRQKRISTAINEVVLHPGKVAHMIEFEVYIDETFAFSQRSDGLIISTPTGSTAYSLSAGGPILTPSLDAITLVPMFPHTLSARPLVINSSSTIRLRFSHRRSDLEISCDSQIALPIQEGEDVLIRRCDYHLNLIHPKDYSYFNTLSTKLGWSKKLF</sequence>
<keyword id="KW-0067">ATP-binding</keyword>
<keyword id="KW-0963">Cytoplasm</keyword>
<keyword id="KW-0418">Kinase</keyword>
<keyword id="KW-0520">NAD</keyword>
<keyword id="KW-0521">NADP</keyword>
<keyword id="KW-0547">Nucleotide-binding</keyword>
<keyword id="KW-0808">Transferase</keyword>
<reference key="1">
    <citation type="journal article" date="2011" name="J. Bacteriol.">
        <title>Comparative genomics of 28 Salmonella enterica isolates: evidence for CRISPR-mediated adaptive sublineage evolution.</title>
        <authorList>
            <person name="Fricke W.F."/>
            <person name="Mammel M.K."/>
            <person name="McDermott P.F."/>
            <person name="Tartera C."/>
            <person name="White D.G."/>
            <person name="Leclerc J.E."/>
            <person name="Ravel J."/>
            <person name="Cebula T.A."/>
        </authorList>
    </citation>
    <scope>NUCLEOTIDE SEQUENCE [LARGE SCALE GENOMIC DNA]</scope>
    <source>
        <strain>SL476</strain>
    </source>
</reference>
<accession>B4TE58</accession>
<dbReference type="EC" id="2.7.1.23" evidence="1"/>
<dbReference type="EMBL" id="CP001120">
    <property type="protein sequence ID" value="ACF68931.1"/>
    <property type="molecule type" value="Genomic_DNA"/>
</dbReference>
<dbReference type="RefSeq" id="WP_001059155.1">
    <property type="nucleotide sequence ID" value="NC_011083.1"/>
</dbReference>
<dbReference type="SMR" id="B4TE58"/>
<dbReference type="KEGG" id="seh:SeHA_C2898"/>
<dbReference type="HOGENOM" id="CLU_008831_0_1_6"/>
<dbReference type="Proteomes" id="UP000001866">
    <property type="component" value="Chromosome"/>
</dbReference>
<dbReference type="GO" id="GO:0005737">
    <property type="term" value="C:cytoplasm"/>
    <property type="evidence" value="ECO:0007669"/>
    <property type="project" value="UniProtKB-SubCell"/>
</dbReference>
<dbReference type="GO" id="GO:0005524">
    <property type="term" value="F:ATP binding"/>
    <property type="evidence" value="ECO:0007669"/>
    <property type="project" value="UniProtKB-KW"/>
</dbReference>
<dbReference type="GO" id="GO:0046872">
    <property type="term" value="F:metal ion binding"/>
    <property type="evidence" value="ECO:0007669"/>
    <property type="project" value="UniProtKB-UniRule"/>
</dbReference>
<dbReference type="GO" id="GO:0051287">
    <property type="term" value="F:NAD binding"/>
    <property type="evidence" value="ECO:0007669"/>
    <property type="project" value="UniProtKB-ARBA"/>
</dbReference>
<dbReference type="GO" id="GO:0003951">
    <property type="term" value="F:NAD+ kinase activity"/>
    <property type="evidence" value="ECO:0007669"/>
    <property type="project" value="UniProtKB-UniRule"/>
</dbReference>
<dbReference type="GO" id="GO:0019674">
    <property type="term" value="P:NAD metabolic process"/>
    <property type="evidence" value="ECO:0007669"/>
    <property type="project" value="InterPro"/>
</dbReference>
<dbReference type="GO" id="GO:0006741">
    <property type="term" value="P:NADP biosynthetic process"/>
    <property type="evidence" value="ECO:0007669"/>
    <property type="project" value="UniProtKB-UniRule"/>
</dbReference>
<dbReference type="FunFam" id="2.60.200.30:FF:000001">
    <property type="entry name" value="NAD kinase"/>
    <property type="match status" value="1"/>
</dbReference>
<dbReference type="FunFam" id="3.40.50.10330:FF:000004">
    <property type="entry name" value="NAD kinase"/>
    <property type="match status" value="1"/>
</dbReference>
<dbReference type="Gene3D" id="3.40.50.10330">
    <property type="entry name" value="Probable inorganic polyphosphate/atp-NAD kinase, domain 1"/>
    <property type="match status" value="1"/>
</dbReference>
<dbReference type="Gene3D" id="2.60.200.30">
    <property type="entry name" value="Probable inorganic polyphosphate/atp-NAD kinase, domain 2"/>
    <property type="match status" value="1"/>
</dbReference>
<dbReference type="HAMAP" id="MF_00361">
    <property type="entry name" value="NAD_kinase"/>
    <property type="match status" value="1"/>
</dbReference>
<dbReference type="InterPro" id="IPR017438">
    <property type="entry name" value="ATP-NAD_kinase_N"/>
</dbReference>
<dbReference type="InterPro" id="IPR017437">
    <property type="entry name" value="ATP-NAD_kinase_PpnK-typ_C"/>
</dbReference>
<dbReference type="InterPro" id="IPR016064">
    <property type="entry name" value="NAD/diacylglycerol_kinase_sf"/>
</dbReference>
<dbReference type="InterPro" id="IPR002504">
    <property type="entry name" value="NADK"/>
</dbReference>
<dbReference type="NCBIfam" id="NF002306">
    <property type="entry name" value="PRK01231.1"/>
    <property type="match status" value="1"/>
</dbReference>
<dbReference type="NCBIfam" id="NF002893">
    <property type="entry name" value="PRK03378.1"/>
    <property type="match status" value="1"/>
</dbReference>
<dbReference type="PANTHER" id="PTHR20275">
    <property type="entry name" value="NAD KINASE"/>
    <property type="match status" value="1"/>
</dbReference>
<dbReference type="PANTHER" id="PTHR20275:SF0">
    <property type="entry name" value="NAD KINASE"/>
    <property type="match status" value="1"/>
</dbReference>
<dbReference type="Pfam" id="PF01513">
    <property type="entry name" value="NAD_kinase"/>
    <property type="match status" value="1"/>
</dbReference>
<dbReference type="Pfam" id="PF20143">
    <property type="entry name" value="NAD_kinase_C"/>
    <property type="match status" value="1"/>
</dbReference>
<dbReference type="SUPFAM" id="SSF111331">
    <property type="entry name" value="NAD kinase/diacylglycerol kinase-like"/>
    <property type="match status" value="1"/>
</dbReference>
<gene>
    <name evidence="1" type="primary">nadK</name>
    <name type="ordered locus">SeHA_C2898</name>
</gene>
<comment type="function">
    <text evidence="1">Involved in the regulation of the intracellular balance of NAD and NADP, and is a key enzyme in the biosynthesis of NADP. Catalyzes specifically the phosphorylation on 2'-hydroxyl of the adenosine moiety of NAD to yield NADP.</text>
</comment>
<comment type="catalytic activity">
    <reaction evidence="1">
        <text>NAD(+) + ATP = ADP + NADP(+) + H(+)</text>
        <dbReference type="Rhea" id="RHEA:18629"/>
        <dbReference type="ChEBI" id="CHEBI:15378"/>
        <dbReference type="ChEBI" id="CHEBI:30616"/>
        <dbReference type="ChEBI" id="CHEBI:57540"/>
        <dbReference type="ChEBI" id="CHEBI:58349"/>
        <dbReference type="ChEBI" id="CHEBI:456216"/>
        <dbReference type="EC" id="2.7.1.23"/>
    </reaction>
</comment>
<comment type="cofactor">
    <cofactor evidence="1">
        <name>a divalent metal cation</name>
        <dbReference type="ChEBI" id="CHEBI:60240"/>
    </cofactor>
</comment>
<comment type="subcellular location">
    <subcellularLocation>
        <location evidence="1">Cytoplasm</location>
    </subcellularLocation>
</comment>
<comment type="similarity">
    <text evidence="1">Belongs to the NAD kinase family.</text>
</comment>
<organism>
    <name type="scientific">Salmonella heidelberg (strain SL476)</name>
    <dbReference type="NCBI Taxonomy" id="454169"/>
    <lineage>
        <taxon>Bacteria</taxon>
        <taxon>Pseudomonadati</taxon>
        <taxon>Pseudomonadota</taxon>
        <taxon>Gammaproteobacteria</taxon>
        <taxon>Enterobacterales</taxon>
        <taxon>Enterobacteriaceae</taxon>
        <taxon>Salmonella</taxon>
    </lineage>
</organism>
<protein>
    <recommendedName>
        <fullName evidence="1">NAD kinase</fullName>
        <ecNumber evidence="1">2.7.1.23</ecNumber>
    </recommendedName>
    <alternativeName>
        <fullName evidence="1">ATP-dependent NAD kinase</fullName>
    </alternativeName>
</protein>